<keyword id="KW-0025">Alternative splicing</keyword>
<keyword id="KW-1015">Disulfide bond</keyword>
<keyword id="KW-0325">Glycoprotein</keyword>
<keyword id="KW-0393">Immunoglobulin domain</keyword>
<keyword id="KW-0472">Membrane</keyword>
<keyword id="KW-1267">Proteomics identification</keyword>
<keyword id="KW-1185">Reference proteome</keyword>
<keyword id="KW-0677">Repeat</keyword>
<keyword id="KW-0732">Signal</keyword>
<keyword id="KW-0812">Transmembrane</keyword>
<keyword id="KW-1133">Transmembrane helix</keyword>
<comment type="interaction">
    <interactant intactId="EBI-18323486">
        <id>Q86XK7</id>
    </interactant>
    <interactant intactId="EBI-3907816">
        <id>P54852</id>
        <label>EMP3</label>
    </interactant>
    <organismsDiffer>false</organismsDiffer>
    <experiments>3</experiments>
</comment>
<comment type="interaction">
    <interactant intactId="EBI-18323486">
        <id>Q86XK7</id>
    </interactant>
    <interactant intactId="EBI-1041722">
        <id>Q04756</id>
        <label>HGFAC</label>
    </interactant>
    <organismsDiffer>false</organismsDiffer>
    <experiments>3</experiments>
</comment>
<comment type="interaction">
    <interactant intactId="EBI-18323486">
        <id>Q86XK7</id>
    </interactant>
    <interactant intactId="EBI-10317425">
        <id>Q9NZG7</id>
        <label>NINJ2</label>
    </interactant>
    <organismsDiffer>false</organismsDiffer>
    <experiments>3</experiments>
</comment>
<comment type="interaction">
    <interactant intactId="EBI-18323486">
        <id>Q86XK7</id>
    </interactant>
    <interactant intactId="EBI-12237619">
        <id>O75841</id>
        <label>UPK1B</label>
    </interactant>
    <organismsDiffer>false</organismsDiffer>
    <experiments>3</experiments>
</comment>
<comment type="subcellular location">
    <subcellularLocation>
        <location evidence="6">Membrane</location>
        <topology evidence="6">Single-pass type I membrane protein</topology>
    </subcellularLocation>
</comment>
<comment type="alternative products">
    <event type="alternative splicing"/>
    <isoform>
        <id>Q86XK7-1</id>
        <name>1</name>
        <sequence type="displayed"/>
    </isoform>
    <isoform>
        <id>Q86XK7-2</id>
        <name>2</name>
        <sequence type="described" ref="VSP_045475"/>
    </isoform>
</comment>
<comment type="tissue specificity">
    <text evidence="4">Detected only in stomach mucosa and testis, and to a much lesser level in pancreas (at protein level). Detected in gastric cancers (31%), esophageal carcinomas (50%) and ovarian cancers (23%).</text>
</comment>
<comment type="PTM">
    <text evidence="4">Highly N-glycosylated. Appears not to contain significant amounts of O-linked carbohydrates or sialic acid in its sugar moieties.</text>
</comment>
<comment type="sequence caution" evidence="6">
    <conflict type="erroneous initiation">
        <sequence resource="EMBL-CDS" id="CAE45954"/>
    </conflict>
</comment>
<accession>Q86XK7</accession>
<accession>C9J4P2</accession>
<accession>Q6MZS4</accession>
<sequence length="387" mass="41811">MVFAFWKVFLILSCLAGQVSVVQVTIPDGFVNVTVGSNVTLICIYTTTVASREQLSIQWSFFHKKEMEPISIYFSQGGQAVAIGQFKDRITGSNDPGNASITISHMQPADSGIYICDVNNPPDFLGQNQGILNVSVLVKPSKPLCSVQGRPETGHTISLSCLSALGTPSPVYYWHKLEGRDIVPVKENFNPTTGILVIGNLTNFEQGYYQCTAINRLGNSSCEIDLTSSHPEVGIIVGALIGSLVGAAIIISVVCFARNKAKAKAKERNSKTIAELEPMTKINPRGESEAMPREDATQLEVTLPSSIHETGPDTIQEPDYEPKPTQEPAPEPAPGSEPMAVPDLDIELELEPETQSELEPEPEPEPESEPGVVVEPLSEDEKGVVKA</sequence>
<feature type="signal peptide" evidence="1">
    <location>
        <begin position="1"/>
        <end position="21"/>
    </location>
</feature>
<feature type="chain" id="PRO_0000313573" description="V-set and immunoglobulin domain-containing protein 1">
    <location>
        <begin position="22"/>
        <end position="387"/>
    </location>
</feature>
<feature type="topological domain" description="Extracellular" evidence="1">
    <location>
        <begin position="22"/>
        <end position="232"/>
    </location>
</feature>
<feature type="transmembrane region" description="Helical" evidence="1">
    <location>
        <begin position="233"/>
        <end position="253"/>
    </location>
</feature>
<feature type="topological domain" description="Cytoplasmic" evidence="1">
    <location>
        <begin position="254"/>
        <end position="387"/>
    </location>
</feature>
<feature type="domain" description="Ig-like V-type">
    <location>
        <begin position="22"/>
        <end position="132"/>
    </location>
</feature>
<feature type="domain" description="Ig-like C2-type">
    <location>
        <begin position="140"/>
        <end position="227"/>
    </location>
</feature>
<feature type="region of interest" description="Disordered" evidence="3">
    <location>
        <begin position="266"/>
        <end position="387"/>
    </location>
</feature>
<feature type="compositionally biased region" description="Basic and acidic residues" evidence="3">
    <location>
        <begin position="284"/>
        <end position="296"/>
    </location>
</feature>
<feature type="compositionally biased region" description="Polar residues" evidence="3">
    <location>
        <begin position="299"/>
        <end position="308"/>
    </location>
</feature>
<feature type="compositionally biased region" description="Pro residues" evidence="3">
    <location>
        <begin position="325"/>
        <end position="335"/>
    </location>
</feature>
<feature type="compositionally biased region" description="Acidic residues" evidence="3">
    <location>
        <begin position="344"/>
        <end position="368"/>
    </location>
</feature>
<feature type="glycosylation site" description="N-linked (GlcNAc...) asparagine" evidence="1">
    <location>
        <position position="32"/>
    </location>
</feature>
<feature type="glycosylation site" description="N-linked (GlcNAc...) asparagine" evidence="1">
    <location>
        <position position="38"/>
    </location>
</feature>
<feature type="glycosylation site" description="N-linked (GlcNAc...) asparagine" evidence="1">
    <location>
        <position position="133"/>
    </location>
</feature>
<feature type="glycosylation site" description="N-linked (GlcNAc...) asparagine" evidence="1">
    <location>
        <position position="200"/>
    </location>
</feature>
<feature type="glycosylation site" description="N-linked (GlcNAc...) asparagine" evidence="1">
    <location>
        <position position="219"/>
    </location>
</feature>
<feature type="disulfide bond" evidence="2">
    <location>
        <begin position="43"/>
        <end position="116"/>
    </location>
</feature>
<feature type="disulfide bond" evidence="2">
    <location>
        <begin position="161"/>
        <end position="211"/>
    </location>
</feature>
<feature type="splice variant" id="VSP_045475" description="In isoform 2." evidence="5">
    <original>S</original>
    <variation>SHSSCLSTEGMEEKAVSQCLKMTHARDARGRCSWTSE</variation>
    <location>
        <position position="71"/>
    </location>
</feature>
<feature type="sequence variant" id="VAR_049955" description="In dbSNP:rs17254305.">
    <original>V</original>
    <variation>I</variation>
    <location>
        <position position="147"/>
    </location>
</feature>
<organism>
    <name type="scientific">Homo sapiens</name>
    <name type="common">Human</name>
    <dbReference type="NCBI Taxonomy" id="9606"/>
    <lineage>
        <taxon>Eukaryota</taxon>
        <taxon>Metazoa</taxon>
        <taxon>Chordata</taxon>
        <taxon>Craniata</taxon>
        <taxon>Vertebrata</taxon>
        <taxon>Euteleostomi</taxon>
        <taxon>Mammalia</taxon>
        <taxon>Eutheria</taxon>
        <taxon>Euarchontoglires</taxon>
        <taxon>Primates</taxon>
        <taxon>Haplorrhini</taxon>
        <taxon>Catarrhini</taxon>
        <taxon>Hominidae</taxon>
        <taxon>Homo</taxon>
    </lineage>
</organism>
<reference key="1">
    <citation type="journal article" date="2004" name="Nat. Genet.">
        <title>Complete sequencing and characterization of 21,243 full-length human cDNAs.</title>
        <authorList>
            <person name="Ota T."/>
            <person name="Suzuki Y."/>
            <person name="Nishikawa T."/>
            <person name="Otsuki T."/>
            <person name="Sugiyama T."/>
            <person name="Irie R."/>
            <person name="Wakamatsu A."/>
            <person name="Hayashi K."/>
            <person name="Sato H."/>
            <person name="Nagai K."/>
            <person name="Kimura K."/>
            <person name="Makita H."/>
            <person name="Sekine M."/>
            <person name="Obayashi M."/>
            <person name="Nishi T."/>
            <person name="Shibahara T."/>
            <person name="Tanaka T."/>
            <person name="Ishii S."/>
            <person name="Yamamoto J."/>
            <person name="Saito K."/>
            <person name="Kawai Y."/>
            <person name="Isono Y."/>
            <person name="Nakamura Y."/>
            <person name="Nagahari K."/>
            <person name="Murakami K."/>
            <person name="Yasuda T."/>
            <person name="Iwayanagi T."/>
            <person name="Wagatsuma M."/>
            <person name="Shiratori A."/>
            <person name="Sudo H."/>
            <person name="Hosoiri T."/>
            <person name="Kaku Y."/>
            <person name="Kodaira H."/>
            <person name="Kondo H."/>
            <person name="Sugawara M."/>
            <person name="Takahashi M."/>
            <person name="Kanda K."/>
            <person name="Yokoi T."/>
            <person name="Furuya T."/>
            <person name="Kikkawa E."/>
            <person name="Omura Y."/>
            <person name="Abe K."/>
            <person name="Kamihara K."/>
            <person name="Katsuta N."/>
            <person name="Sato K."/>
            <person name="Tanikawa M."/>
            <person name="Yamazaki M."/>
            <person name="Ninomiya K."/>
            <person name="Ishibashi T."/>
            <person name="Yamashita H."/>
            <person name="Murakawa K."/>
            <person name="Fujimori K."/>
            <person name="Tanai H."/>
            <person name="Kimata M."/>
            <person name="Watanabe M."/>
            <person name="Hiraoka S."/>
            <person name="Chiba Y."/>
            <person name="Ishida S."/>
            <person name="Ono Y."/>
            <person name="Takiguchi S."/>
            <person name="Watanabe S."/>
            <person name="Yosida M."/>
            <person name="Hotuta T."/>
            <person name="Kusano J."/>
            <person name="Kanehori K."/>
            <person name="Takahashi-Fujii A."/>
            <person name="Hara H."/>
            <person name="Tanase T.-O."/>
            <person name="Nomura Y."/>
            <person name="Togiya S."/>
            <person name="Komai F."/>
            <person name="Hara R."/>
            <person name="Takeuchi K."/>
            <person name="Arita M."/>
            <person name="Imose N."/>
            <person name="Musashino K."/>
            <person name="Yuuki H."/>
            <person name="Oshima A."/>
            <person name="Sasaki N."/>
            <person name="Aotsuka S."/>
            <person name="Yoshikawa Y."/>
            <person name="Matsunawa H."/>
            <person name="Ichihara T."/>
            <person name="Shiohata N."/>
            <person name="Sano S."/>
            <person name="Moriya S."/>
            <person name="Momiyama H."/>
            <person name="Satoh N."/>
            <person name="Takami S."/>
            <person name="Terashima Y."/>
            <person name="Suzuki O."/>
            <person name="Nakagawa S."/>
            <person name="Senoh A."/>
            <person name="Mizoguchi H."/>
            <person name="Goto Y."/>
            <person name="Shimizu F."/>
            <person name="Wakebe H."/>
            <person name="Hishigaki H."/>
            <person name="Watanabe T."/>
            <person name="Sugiyama A."/>
            <person name="Takemoto M."/>
            <person name="Kawakami B."/>
            <person name="Yamazaki M."/>
            <person name="Watanabe K."/>
            <person name="Kumagai A."/>
            <person name="Itakura S."/>
            <person name="Fukuzumi Y."/>
            <person name="Fujimori Y."/>
            <person name="Komiyama M."/>
            <person name="Tashiro H."/>
            <person name="Tanigami A."/>
            <person name="Fujiwara T."/>
            <person name="Ono T."/>
            <person name="Yamada K."/>
            <person name="Fujii Y."/>
            <person name="Ozaki K."/>
            <person name="Hirao M."/>
            <person name="Ohmori Y."/>
            <person name="Kawabata A."/>
            <person name="Hikiji T."/>
            <person name="Kobatake N."/>
            <person name="Inagaki H."/>
            <person name="Ikema Y."/>
            <person name="Okamoto S."/>
            <person name="Okitani R."/>
            <person name="Kawakami T."/>
            <person name="Noguchi S."/>
            <person name="Itoh T."/>
            <person name="Shigeta K."/>
            <person name="Senba T."/>
            <person name="Matsumura K."/>
            <person name="Nakajima Y."/>
            <person name="Mizuno T."/>
            <person name="Morinaga M."/>
            <person name="Sasaki M."/>
            <person name="Togashi T."/>
            <person name="Oyama M."/>
            <person name="Hata H."/>
            <person name="Watanabe M."/>
            <person name="Komatsu T."/>
            <person name="Mizushima-Sugano J."/>
            <person name="Satoh T."/>
            <person name="Shirai Y."/>
            <person name="Takahashi Y."/>
            <person name="Nakagawa K."/>
            <person name="Okumura K."/>
            <person name="Nagase T."/>
            <person name="Nomura N."/>
            <person name="Kikuchi H."/>
            <person name="Masuho Y."/>
            <person name="Yamashita R."/>
            <person name="Nakai K."/>
            <person name="Yada T."/>
            <person name="Nakamura Y."/>
            <person name="Ohara O."/>
            <person name="Isogai T."/>
            <person name="Sugano S."/>
        </authorList>
    </citation>
    <scope>NUCLEOTIDE SEQUENCE [LARGE SCALE MRNA] (ISOFORM 2)</scope>
    <source>
        <tissue>Stomach</tissue>
    </source>
</reference>
<reference key="2">
    <citation type="journal article" date="2007" name="BMC Genomics">
        <title>The full-ORF clone resource of the German cDNA consortium.</title>
        <authorList>
            <person name="Bechtel S."/>
            <person name="Rosenfelder H."/>
            <person name="Duda A."/>
            <person name="Schmidt C.P."/>
            <person name="Ernst U."/>
            <person name="Wellenreuther R."/>
            <person name="Mehrle A."/>
            <person name="Schuster C."/>
            <person name="Bahr A."/>
            <person name="Bloecker H."/>
            <person name="Heubner D."/>
            <person name="Hoerlein A."/>
            <person name="Michel G."/>
            <person name="Wedler H."/>
            <person name="Koehrer K."/>
            <person name="Ottenwaelder B."/>
            <person name="Poustka A."/>
            <person name="Wiemann S."/>
            <person name="Schupp I."/>
        </authorList>
    </citation>
    <scope>NUCLEOTIDE SEQUENCE [LARGE SCALE MRNA] (ISOFORM 1)</scope>
    <source>
        <tissue>Testis</tissue>
    </source>
</reference>
<reference key="3">
    <citation type="journal article" date="2005" name="Nature">
        <title>The DNA sequence of the human X chromosome.</title>
        <authorList>
            <person name="Ross M.T."/>
            <person name="Grafham D.V."/>
            <person name="Coffey A.J."/>
            <person name="Scherer S."/>
            <person name="McLay K."/>
            <person name="Muzny D."/>
            <person name="Platzer M."/>
            <person name="Howell G.R."/>
            <person name="Burrows C."/>
            <person name="Bird C.P."/>
            <person name="Frankish A."/>
            <person name="Lovell F.L."/>
            <person name="Howe K.L."/>
            <person name="Ashurst J.L."/>
            <person name="Fulton R.S."/>
            <person name="Sudbrak R."/>
            <person name="Wen G."/>
            <person name="Jones M.C."/>
            <person name="Hurles M.E."/>
            <person name="Andrews T.D."/>
            <person name="Scott C.E."/>
            <person name="Searle S."/>
            <person name="Ramser J."/>
            <person name="Whittaker A."/>
            <person name="Deadman R."/>
            <person name="Carter N.P."/>
            <person name="Hunt S.E."/>
            <person name="Chen R."/>
            <person name="Cree A."/>
            <person name="Gunaratne P."/>
            <person name="Havlak P."/>
            <person name="Hodgson A."/>
            <person name="Metzker M.L."/>
            <person name="Richards S."/>
            <person name="Scott G."/>
            <person name="Steffen D."/>
            <person name="Sodergren E."/>
            <person name="Wheeler D.A."/>
            <person name="Worley K.C."/>
            <person name="Ainscough R."/>
            <person name="Ambrose K.D."/>
            <person name="Ansari-Lari M.A."/>
            <person name="Aradhya S."/>
            <person name="Ashwell R.I."/>
            <person name="Babbage A.K."/>
            <person name="Bagguley C.L."/>
            <person name="Ballabio A."/>
            <person name="Banerjee R."/>
            <person name="Barker G.E."/>
            <person name="Barlow K.F."/>
            <person name="Barrett I.P."/>
            <person name="Bates K.N."/>
            <person name="Beare D.M."/>
            <person name="Beasley H."/>
            <person name="Beasley O."/>
            <person name="Beck A."/>
            <person name="Bethel G."/>
            <person name="Blechschmidt K."/>
            <person name="Brady N."/>
            <person name="Bray-Allen S."/>
            <person name="Bridgeman A.M."/>
            <person name="Brown A.J."/>
            <person name="Brown M.J."/>
            <person name="Bonnin D."/>
            <person name="Bruford E.A."/>
            <person name="Buhay C."/>
            <person name="Burch P."/>
            <person name="Burford D."/>
            <person name="Burgess J."/>
            <person name="Burrill W."/>
            <person name="Burton J."/>
            <person name="Bye J.M."/>
            <person name="Carder C."/>
            <person name="Carrel L."/>
            <person name="Chako J."/>
            <person name="Chapman J.C."/>
            <person name="Chavez D."/>
            <person name="Chen E."/>
            <person name="Chen G."/>
            <person name="Chen Y."/>
            <person name="Chen Z."/>
            <person name="Chinault C."/>
            <person name="Ciccodicola A."/>
            <person name="Clark S.Y."/>
            <person name="Clarke G."/>
            <person name="Clee C.M."/>
            <person name="Clegg S."/>
            <person name="Clerc-Blankenburg K."/>
            <person name="Clifford K."/>
            <person name="Cobley V."/>
            <person name="Cole C.G."/>
            <person name="Conquer J.S."/>
            <person name="Corby N."/>
            <person name="Connor R.E."/>
            <person name="David R."/>
            <person name="Davies J."/>
            <person name="Davis C."/>
            <person name="Davis J."/>
            <person name="Delgado O."/>
            <person name="Deshazo D."/>
            <person name="Dhami P."/>
            <person name="Ding Y."/>
            <person name="Dinh H."/>
            <person name="Dodsworth S."/>
            <person name="Draper H."/>
            <person name="Dugan-Rocha S."/>
            <person name="Dunham A."/>
            <person name="Dunn M."/>
            <person name="Durbin K.J."/>
            <person name="Dutta I."/>
            <person name="Eades T."/>
            <person name="Ellwood M."/>
            <person name="Emery-Cohen A."/>
            <person name="Errington H."/>
            <person name="Evans K.L."/>
            <person name="Faulkner L."/>
            <person name="Francis F."/>
            <person name="Frankland J."/>
            <person name="Fraser A.E."/>
            <person name="Galgoczy P."/>
            <person name="Gilbert J."/>
            <person name="Gill R."/>
            <person name="Gloeckner G."/>
            <person name="Gregory S.G."/>
            <person name="Gribble S."/>
            <person name="Griffiths C."/>
            <person name="Grocock R."/>
            <person name="Gu Y."/>
            <person name="Gwilliam R."/>
            <person name="Hamilton C."/>
            <person name="Hart E.A."/>
            <person name="Hawes A."/>
            <person name="Heath P.D."/>
            <person name="Heitmann K."/>
            <person name="Hennig S."/>
            <person name="Hernandez J."/>
            <person name="Hinzmann B."/>
            <person name="Ho S."/>
            <person name="Hoffs M."/>
            <person name="Howden P.J."/>
            <person name="Huckle E.J."/>
            <person name="Hume J."/>
            <person name="Hunt P.J."/>
            <person name="Hunt A.R."/>
            <person name="Isherwood J."/>
            <person name="Jacob L."/>
            <person name="Johnson D."/>
            <person name="Jones S."/>
            <person name="de Jong P.J."/>
            <person name="Joseph S.S."/>
            <person name="Keenan S."/>
            <person name="Kelly S."/>
            <person name="Kershaw J.K."/>
            <person name="Khan Z."/>
            <person name="Kioschis P."/>
            <person name="Klages S."/>
            <person name="Knights A.J."/>
            <person name="Kosiura A."/>
            <person name="Kovar-Smith C."/>
            <person name="Laird G.K."/>
            <person name="Langford C."/>
            <person name="Lawlor S."/>
            <person name="Leversha M."/>
            <person name="Lewis L."/>
            <person name="Liu W."/>
            <person name="Lloyd C."/>
            <person name="Lloyd D.M."/>
            <person name="Loulseged H."/>
            <person name="Loveland J.E."/>
            <person name="Lovell J.D."/>
            <person name="Lozado R."/>
            <person name="Lu J."/>
            <person name="Lyne R."/>
            <person name="Ma J."/>
            <person name="Maheshwari M."/>
            <person name="Matthews L.H."/>
            <person name="McDowall J."/>
            <person name="McLaren S."/>
            <person name="McMurray A."/>
            <person name="Meidl P."/>
            <person name="Meitinger T."/>
            <person name="Milne S."/>
            <person name="Miner G."/>
            <person name="Mistry S.L."/>
            <person name="Morgan M."/>
            <person name="Morris S."/>
            <person name="Mueller I."/>
            <person name="Mullikin J.C."/>
            <person name="Nguyen N."/>
            <person name="Nordsiek G."/>
            <person name="Nyakatura G."/>
            <person name="O'dell C.N."/>
            <person name="Okwuonu G."/>
            <person name="Palmer S."/>
            <person name="Pandian R."/>
            <person name="Parker D."/>
            <person name="Parrish J."/>
            <person name="Pasternak S."/>
            <person name="Patel D."/>
            <person name="Pearce A.V."/>
            <person name="Pearson D.M."/>
            <person name="Pelan S.E."/>
            <person name="Perez L."/>
            <person name="Porter K.M."/>
            <person name="Ramsey Y."/>
            <person name="Reichwald K."/>
            <person name="Rhodes S."/>
            <person name="Ridler K.A."/>
            <person name="Schlessinger D."/>
            <person name="Schueler M.G."/>
            <person name="Sehra H.K."/>
            <person name="Shaw-Smith C."/>
            <person name="Shen H."/>
            <person name="Sheridan E.M."/>
            <person name="Shownkeen R."/>
            <person name="Skuce C.D."/>
            <person name="Smith M.L."/>
            <person name="Sotheran E.C."/>
            <person name="Steingruber H.E."/>
            <person name="Steward C.A."/>
            <person name="Storey R."/>
            <person name="Swann R.M."/>
            <person name="Swarbreck D."/>
            <person name="Tabor P.E."/>
            <person name="Taudien S."/>
            <person name="Taylor T."/>
            <person name="Teague B."/>
            <person name="Thomas K."/>
            <person name="Thorpe A."/>
            <person name="Timms K."/>
            <person name="Tracey A."/>
            <person name="Trevanion S."/>
            <person name="Tromans A.C."/>
            <person name="d'Urso M."/>
            <person name="Verduzco D."/>
            <person name="Villasana D."/>
            <person name="Waldron L."/>
            <person name="Wall M."/>
            <person name="Wang Q."/>
            <person name="Warren J."/>
            <person name="Warry G.L."/>
            <person name="Wei X."/>
            <person name="West A."/>
            <person name="Whitehead S.L."/>
            <person name="Whiteley M.N."/>
            <person name="Wilkinson J.E."/>
            <person name="Willey D.L."/>
            <person name="Williams G."/>
            <person name="Williams L."/>
            <person name="Williamson A."/>
            <person name="Williamson H."/>
            <person name="Wilming L."/>
            <person name="Woodmansey R.L."/>
            <person name="Wray P.W."/>
            <person name="Yen J."/>
            <person name="Zhang J."/>
            <person name="Zhou J."/>
            <person name="Zoghbi H."/>
            <person name="Zorilla S."/>
            <person name="Buck D."/>
            <person name="Reinhardt R."/>
            <person name="Poustka A."/>
            <person name="Rosenthal A."/>
            <person name="Lehrach H."/>
            <person name="Meindl A."/>
            <person name="Minx P.J."/>
            <person name="Hillier L.W."/>
            <person name="Willard H.F."/>
            <person name="Wilson R.K."/>
            <person name="Waterston R.H."/>
            <person name="Rice C.M."/>
            <person name="Vaudin M."/>
            <person name="Coulson A."/>
            <person name="Nelson D.L."/>
            <person name="Weinstock G."/>
            <person name="Sulston J.E."/>
            <person name="Durbin R.M."/>
            <person name="Hubbard T."/>
            <person name="Gibbs R.A."/>
            <person name="Beck S."/>
            <person name="Rogers J."/>
            <person name="Bentley D.R."/>
        </authorList>
    </citation>
    <scope>NUCLEOTIDE SEQUENCE [LARGE SCALE GENOMIC DNA]</scope>
</reference>
<reference key="4">
    <citation type="journal article" date="2004" name="Genome Res.">
        <title>The status, quality, and expansion of the NIH full-length cDNA project: the Mammalian Gene Collection (MGC).</title>
        <authorList>
            <consortium name="The MGC Project Team"/>
        </authorList>
    </citation>
    <scope>NUCLEOTIDE SEQUENCE [LARGE SCALE MRNA] (ISOFORM 1)</scope>
    <source>
        <tissue>Testis</tissue>
    </source>
</reference>
<reference key="5">
    <citation type="journal article" date="2006" name="Cancer Immun.">
        <title>Glycoprotein A34, a novel target for antibody-based cancer immunotherapy.</title>
        <authorList>
            <person name="Scanlan M.J."/>
            <person name="Ritter G."/>
            <person name="Yin B.W."/>
            <person name="Williams C. Jr."/>
            <person name="Cohen L.S."/>
            <person name="Coplan K.A."/>
            <person name="Fortunato S.R."/>
            <person name="Frosina D."/>
            <person name="Lee S.Y."/>
            <person name="Murray A.E."/>
            <person name="Chua R."/>
            <person name="Filonenko V.V."/>
            <person name="Sato E."/>
            <person name="Old L.J."/>
            <person name="Jungbluth A.A."/>
        </authorList>
    </citation>
    <scope>IDENTIFICATION</scope>
    <scope>TISSUE SPECIFICITY</scope>
    <scope>GLYCOSYLATION</scope>
</reference>
<proteinExistence type="evidence at protein level"/>
<dbReference type="EMBL" id="AK301311">
    <property type="status" value="NOT_ANNOTATED_CDS"/>
    <property type="molecule type" value="mRNA"/>
</dbReference>
<dbReference type="EMBL" id="BX640913">
    <property type="protein sequence ID" value="CAE45954.1"/>
    <property type="status" value="ALT_INIT"/>
    <property type="molecule type" value="mRNA"/>
</dbReference>
<dbReference type="EMBL" id="BX648658">
    <property type="protein sequence ID" value="CAH56142.1"/>
    <property type="molecule type" value="mRNA"/>
</dbReference>
<dbReference type="EMBL" id="AL031177">
    <property type="status" value="NOT_ANNOTATED_CDS"/>
    <property type="molecule type" value="Genomic_DNA"/>
</dbReference>
<dbReference type="EMBL" id="AL953860">
    <property type="status" value="NOT_ANNOTATED_CDS"/>
    <property type="molecule type" value="Genomic_DNA"/>
</dbReference>
<dbReference type="EMBL" id="BC043216">
    <property type="protein sequence ID" value="AAH43216.1"/>
    <property type="molecule type" value="mRNA"/>
</dbReference>
<dbReference type="EMBL" id="BK005767">
    <property type="protein sequence ID" value="DAA05750.1"/>
    <property type="molecule type" value="mRNA"/>
</dbReference>
<dbReference type="CCDS" id="CCDS14535.1">
    <molecule id="Q86XK7-1"/>
</dbReference>
<dbReference type="CCDS" id="CCDS55474.1">
    <molecule id="Q86XK7-2"/>
</dbReference>
<dbReference type="RefSeq" id="NP_001164024.1">
    <molecule id="Q86XK7-2"/>
    <property type="nucleotide sequence ID" value="NM_001170553.2"/>
</dbReference>
<dbReference type="RefSeq" id="NP_872413.1">
    <molecule id="Q86XK7-1"/>
    <property type="nucleotide sequence ID" value="NM_182607.5"/>
</dbReference>
<dbReference type="SMR" id="Q86XK7"/>
<dbReference type="BioGRID" id="131072">
    <property type="interactions" value="89"/>
</dbReference>
<dbReference type="FunCoup" id="Q86XK7">
    <property type="interactions" value="94"/>
</dbReference>
<dbReference type="IntAct" id="Q86XK7">
    <property type="interactions" value="71"/>
</dbReference>
<dbReference type="STRING" id="9606.ENSP00000402219"/>
<dbReference type="GlyCosmos" id="Q86XK7">
    <property type="glycosylation" value="5 sites, No reported glycans"/>
</dbReference>
<dbReference type="GlyGen" id="Q86XK7">
    <property type="glycosylation" value="7 sites"/>
</dbReference>
<dbReference type="PhosphoSitePlus" id="Q86XK7"/>
<dbReference type="BioMuta" id="VSIG1"/>
<dbReference type="DMDM" id="74759503"/>
<dbReference type="jPOST" id="Q86XK7"/>
<dbReference type="MassIVE" id="Q86XK7"/>
<dbReference type="PaxDb" id="9606-ENSP00000402219"/>
<dbReference type="PeptideAtlas" id="Q86XK7"/>
<dbReference type="ProteomicsDB" id="70295">
    <molecule id="Q86XK7-1"/>
</dbReference>
<dbReference type="ProteomicsDB" id="8507"/>
<dbReference type="Antibodypedia" id="29360">
    <property type="antibodies" value="195 antibodies from 27 providers"/>
</dbReference>
<dbReference type="DNASU" id="340547"/>
<dbReference type="Ensembl" id="ENST00000217957.10">
    <molecule id="Q86XK7-1"/>
    <property type="protein sequence ID" value="ENSP00000217957.3"/>
    <property type="gene ID" value="ENSG00000101842.14"/>
</dbReference>
<dbReference type="Ensembl" id="ENST00000415430.7">
    <molecule id="Q86XK7-2"/>
    <property type="protein sequence ID" value="ENSP00000402219.3"/>
    <property type="gene ID" value="ENSG00000101842.14"/>
</dbReference>
<dbReference type="GeneID" id="340547"/>
<dbReference type="KEGG" id="hsa:340547"/>
<dbReference type="MANE-Select" id="ENST00000217957.10">
    <property type="protein sequence ID" value="ENSP00000217957.3"/>
    <property type="RefSeq nucleotide sequence ID" value="NM_182607.5"/>
    <property type="RefSeq protein sequence ID" value="NP_872413.1"/>
</dbReference>
<dbReference type="UCSC" id="uc004eno.4">
    <molecule id="Q86XK7-1"/>
    <property type="organism name" value="human"/>
</dbReference>
<dbReference type="AGR" id="HGNC:28675"/>
<dbReference type="CTD" id="340547"/>
<dbReference type="DisGeNET" id="340547"/>
<dbReference type="GeneCards" id="VSIG1"/>
<dbReference type="HGNC" id="HGNC:28675">
    <property type="gene designation" value="VSIG1"/>
</dbReference>
<dbReference type="HPA" id="ENSG00000101842">
    <property type="expression patterns" value="Tissue enriched (stomach)"/>
</dbReference>
<dbReference type="MalaCards" id="VSIG1"/>
<dbReference type="MIM" id="300620">
    <property type="type" value="gene"/>
</dbReference>
<dbReference type="neXtProt" id="NX_Q86XK7"/>
<dbReference type="OpenTargets" id="ENSG00000101842"/>
<dbReference type="PharmGKB" id="PA134944198"/>
<dbReference type="VEuPathDB" id="HostDB:ENSG00000101842"/>
<dbReference type="eggNOG" id="ENOG502QU0R">
    <property type="taxonomic scope" value="Eukaryota"/>
</dbReference>
<dbReference type="GeneTree" id="ENSGT00940000160507"/>
<dbReference type="HOGENOM" id="CLU_040549_4_0_1"/>
<dbReference type="InParanoid" id="Q86XK7"/>
<dbReference type="OMA" id="LGNSTCE"/>
<dbReference type="OrthoDB" id="190835at2759"/>
<dbReference type="PAN-GO" id="Q86XK7">
    <property type="GO annotations" value="2 GO annotations based on evolutionary models"/>
</dbReference>
<dbReference type="PhylomeDB" id="Q86XK7"/>
<dbReference type="TreeFam" id="TF318234"/>
<dbReference type="PathwayCommons" id="Q86XK7"/>
<dbReference type="SignaLink" id="Q86XK7"/>
<dbReference type="BioGRID-ORCS" id="340547">
    <property type="hits" value="14 hits in 774 CRISPR screens"/>
</dbReference>
<dbReference type="ChiTaRS" id="VSIG1">
    <property type="organism name" value="human"/>
</dbReference>
<dbReference type="GenomeRNAi" id="340547"/>
<dbReference type="Pharos" id="Q86XK7">
    <property type="development level" value="Tbio"/>
</dbReference>
<dbReference type="PRO" id="PR:Q86XK7"/>
<dbReference type="Proteomes" id="UP000005640">
    <property type="component" value="Chromosome X"/>
</dbReference>
<dbReference type="RNAct" id="Q86XK7">
    <property type="molecule type" value="protein"/>
</dbReference>
<dbReference type="Bgee" id="ENSG00000101842">
    <property type="expression patterns" value="Expressed in pylorus and 116 other cell types or tissues"/>
</dbReference>
<dbReference type="ExpressionAtlas" id="Q86XK7">
    <property type="expression patterns" value="baseline and differential"/>
</dbReference>
<dbReference type="GO" id="GO:0016323">
    <property type="term" value="C:basolateral plasma membrane"/>
    <property type="evidence" value="ECO:0000318"/>
    <property type="project" value="GO_Central"/>
</dbReference>
<dbReference type="GO" id="GO:0003382">
    <property type="term" value="P:epithelial cell morphogenesis"/>
    <property type="evidence" value="ECO:0007669"/>
    <property type="project" value="InterPro"/>
</dbReference>
<dbReference type="GO" id="GO:0030277">
    <property type="term" value="P:maintenance of gastrointestinal epithelium"/>
    <property type="evidence" value="ECO:0000318"/>
    <property type="project" value="GO_Central"/>
</dbReference>
<dbReference type="FunFam" id="2.60.40.10:FF:000095">
    <property type="entry name" value="immunoglobulin superfamily member 11 isoform X1"/>
    <property type="match status" value="1"/>
</dbReference>
<dbReference type="FunFam" id="2.60.40.10:FF:000931">
    <property type="entry name" value="V-set and immunoglobulin domain containing 1"/>
    <property type="match status" value="1"/>
</dbReference>
<dbReference type="Gene3D" id="2.60.40.10">
    <property type="entry name" value="Immunoglobulins"/>
    <property type="match status" value="2"/>
</dbReference>
<dbReference type="InterPro" id="IPR007110">
    <property type="entry name" value="Ig-like_dom"/>
</dbReference>
<dbReference type="InterPro" id="IPR036179">
    <property type="entry name" value="Ig-like_dom_sf"/>
</dbReference>
<dbReference type="InterPro" id="IPR013783">
    <property type="entry name" value="Ig-like_fold"/>
</dbReference>
<dbReference type="InterPro" id="IPR003599">
    <property type="entry name" value="Ig_sub"/>
</dbReference>
<dbReference type="InterPro" id="IPR003598">
    <property type="entry name" value="Ig_sub2"/>
</dbReference>
<dbReference type="InterPro" id="IPR013106">
    <property type="entry name" value="Ig_V-set"/>
</dbReference>
<dbReference type="InterPro" id="IPR000920">
    <property type="entry name" value="Myelin_P0-rel"/>
</dbReference>
<dbReference type="InterPro" id="IPR029861">
    <property type="entry name" value="VSIG1"/>
</dbReference>
<dbReference type="PANTHER" id="PTHR44974">
    <property type="entry name" value="V-SET AND IMMUNOGLOBULIN DOMAIN-CONTAINING PROTEIN 1"/>
    <property type="match status" value="1"/>
</dbReference>
<dbReference type="PANTHER" id="PTHR44974:SF1">
    <property type="entry name" value="V-SET AND IMMUNOGLOBULIN DOMAIN-CONTAINING PROTEIN 1"/>
    <property type="match status" value="1"/>
</dbReference>
<dbReference type="Pfam" id="PF13927">
    <property type="entry name" value="Ig_3"/>
    <property type="match status" value="1"/>
</dbReference>
<dbReference type="Pfam" id="PF07686">
    <property type="entry name" value="V-set"/>
    <property type="match status" value="1"/>
</dbReference>
<dbReference type="PRINTS" id="PR00213">
    <property type="entry name" value="MYELINP0"/>
</dbReference>
<dbReference type="SMART" id="SM00409">
    <property type="entry name" value="IG"/>
    <property type="match status" value="2"/>
</dbReference>
<dbReference type="SMART" id="SM00408">
    <property type="entry name" value="IGc2"/>
    <property type="match status" value="2"/>
</dbReference>
<dbReference type="SMART" id="SM00406">
    <property type="entry name" value="IGv"/>
    <property type="match status" value="1"/>
</dbReference>
<dbReference type="SUPFAM" id="SSF48726">
    <property type="entry name" value="Immunoglobulin"/>
    <property type="match status" value="2"/>
</dbReference>
<dbReference type="PROSITE" id="PS50835">
    <property type="entry name" value="IG_LIKE"/>
    <property type="match status" value="2"/>
</dbReference>
<protein>
    <recommendedName>
        <fullName>V-set and immunoglobulin domain-containing protein 1</fullName>
    </recommendedName>
    <alternativeName>
        <fullName>Cell surface A33 antigen</fullName>
    </alternativeName>
    <alternativeName>
        <fullName>Glycoprotein A34</fullName>
    </alternativeName>
</protein>
<evidence type="ECO:0000255" key="1"/>
<evidence type="ECO:0000255" key="2">
    <source>
        <dbReference type="PROSITE-ProRule" id="PRU00114"/>
    </source>
</evidence>
<evidence type="ECO:0000256" key="3">
    <source>
        <dbReference type="SAM" id="MobiDB-lite"/>
    </source>
</evidence>
<evidence type="ECO:0000269" key="4">
    <source>
    </source>
</evidence>
<evidence type="ECO:0000303" key="5">
    <source>
    </source>
</evidence>
<evidence type="ECO:0000305" key="6"/>
<name>VSIG1_HUMAN</name>
<gene>
    <name type="primary">VSIG1</name>
    <name type="synonym">GPA34</name>
</gene>